<proteinExistence type="inferred from homology"/>
<dbReference type="EMBL" id="CP001097">
    <property type="protein sequence ID" value="ACD89392.1"/>
    <property type="molecule type" value="Genomic_DNA"/>
</dbReference>
<dbReference type="SMR" id="B3EFA9"/>
<dbReference type="STRING" id="290315.Clim_0298"/>
<dbReference type="KEGG" id="cli:Clim_0298"/>
<dbReference type="eggNOG" id="COG0779">
    <property type="taxonomic scope" value="Bacteria"/>
</dbReference>
<dbReference type="HOGENOM" id="CLU_070525_3_1_10"/>
<dbReference type="OrthoDB" id="9789702at2"/>
<dbReference type="Proteomes" id="UP000008841">
    <property type="component" value="Chromosome"/>
</dbReference>
<dbReference type="GO" id="GO:0005737">
    <property type="term" value="C:cytoplasm"/>
    <property type="evidence" value="ECO:0007669"/>
    <property type="project" value="UniProtKB-SubCell"/>
</dbReference>
<dbReference type="GO" id="GO:0042274">
    <property type="term" value="P:ribosomal small subunit biogenesis"/>
    <property type="evidence" value="ECO:0007669"/>
    <property type="project" value="UniProtKB-UniRule"/>
</dbReference>
<dbReference type="Gene3D" id="3.30.300.70">
    <property type="entry name" value="RimP-like superfamily, N-terminal"/>
    <property type="match status" value="1"/>
</dbReference>
<dbReference type="HAMAP" id="MF_01077">
    <property type="entry name" value="RimP"/>
    <property type="match status" value="1"/>
</dbReference>
<dbReference type="InterPro" id="IPR003728">
    <property type="entry name" value="Ribosome_maturation_RimP"/>
</dbReference>
<dbReference type="InterPro" id="IPR028989">
    <property type="entry name" value="RimP_N"/>
</dbReference>
<dbReference type="InterPro" id="IPR035956">
    <property type="entry name" value="RimP_N_sf"/>
</dbReference>
<dbReference type="NCBIfam" id="NF011234">
    <property type="entry name" value="PRK14641.1"/>
    <property type="match status" value="1"/>
</dbReference>
<dbReference type="PANTHER" id="PTHR33867">
    <property type="entry name" value="RIBOSOME MATURATION FACTOR RIMP"/>
    <property type="match status" value="1"/>
</dbReference>
<dbReference type="PANTHER" id="PTHR33867:SF1">
    <property type="entry name" value="RIBOSOME MATURATION FACTOR RIMP"/>
    <property type="match status" value="1"/>
</dbReference>
<dbReference type="Pfam" id="PF02576">
    <property type="entry name" value="RimP_N"/>
    <property type="match status" value="1"/>
</dbReference>
<dbReference type="SUPFAM" id="SSF75420">
    <property type="entry name" value="YhbC-like, N-terminal domain"/>
    <property type="match status" value="1"/>
</dbReference>
<feature type="chain" id="PRO_1000136745" description="Ribosome maturation factor RimP">
    <location>
        <begin position="1"/>
        <end position="176"/>
    </location>
</feature>
<keyword id="KW-0963">Cytoplasm</keyword>
<keyword id="KW-0690">Ribosome biogenesis</keyword>
<reference key="1">
    <citation type="submission" date="2008-05" db="EMBL/GenBank/DDBJ databases">
        <title>Complete sequence of Chlorobium limicola DSM 245.</title>
        <authorList>
            <consortium name="US DOE Joint Genome Institute"/>
            <person name="Lucas S."/>
            <person name="Copeland A."/>
            <person name="Lapidus A."/>
            <person name="Glavina del Rio T."/>
            <person name="Dalin E."/>
            <person name="Tice H."/>
            <person name="Bruce D."/>
            <person name="Goodwin L."/>
            <person name="Pitluck S."/>
            <person name="Schmutz J."/>
            <person name="Larimer F."/>
            <person name="Land M."/>
            <person name="Hauser L."/>
            <person name="Kyrpides N."/>
            <person name="Ovchinnikova G."/>
            <person name="Zhao F."/>
            <person name="Li T."/>
            <person name="Liu Z."/>
            <person name="Overmann J."/>
            <person name="Bryant D.A."/>
            <person name="Richardson P."/>
        </authorList>
    </citation>
    <scope>NUCLEOTIDE SEQUENCE [LARGE SCALE GENOMIC DNA]</scope>
    <source>
        <strain>DSM 245 / NBRC 103803 / 6330</strain>
    </source>
</reference>
<comment type="function">
    <text evidence="1">Required for maturation of 30S ribosomal subunits.</text>
</comment>
<comment type="subcellular location">
    <subcellularLocation>
        <location evidence="1">Cytoplasm</location>
    </subcellularLocation>
</comment>
<comment type="similarity">
    <text evidence="1">Belongs to the RimP family.</text>
</comment>
<protein>
    <recommendedName>
        <fullName evidence="1">Ribosome maturation factor RimP</fullName>
    </recommendedName>
</protein>
<name>RIMP_CHLL2</name>
<accession>B3EFA9</accession>
<gene>
    <name evidence="1" type="primary">rimP</name>
    <name type="ordered locus">Clim_0298</name>
</gene>
<sequence length="176" mass="19421">MVSMEEKIKACVLQALESAAGTKGEGVYLVSVRVKGAGKQTKIEILLDSDTGIRIDQCSFFSRRIRELLENEGGTPVLDGEDFDLMVSSPGLGEPLLMPRQYLRHTGRLLRVIWKDEQQSEKTVTGRLQQVLKTEGEITAVRLVPVKTGKKSAGNVQEPIELMLDCIVRAVPEAEL</sequence>
<evidence type="ECO:0000255" key="1">
    <source>
        <dbReference type="HAMAP-Rule" id="MF_01077"/>
    </source>
</evidence>
<organism>
    <name type="scientific">Chlorobium limicola (strain DSM 245 / NBRC 103803 / 6330)</name>
    <dbReference type="NCBI Taxonomy" id="290315"/>
    <lineage>
        <taxon>Bacteria</taxon>
        <taxon>Pseudomonadati</taxon>
        <taxon>Chlorobiota</taxon>
        <taxon>Chlorobiia</taxon>
        <taxon>Chlorobiales</taxon>
        <taxon>Chlorobiaceae</taxon>
        <taxon>Chlorobium/Pelodictyon group</taxon>
        <taxon>Chlorobium</taxon>
    </lineage>
</organism>